<name>CASB_BOVIN</name>
<sequence length="224" mass="25107">MKVLILACLVALALARELEELNVPGEIVESLSSSEESITRINKKIEKFQSEEQQQTEDELQDKIHPFAQTQSLVYPFPGPIPNSLPQNIPPLTQTPVVVPPFLQPEVMGVSKVKEAMAPKHKEMPFPKYPVEPFTESQSLTLTDVENLHLPLPLLQSWMHQPHQPLPPTVMFPPQSVLSLSQSKVLPVPQKAVPYPQRDMPIQAFLLYQEPVLGPVRGPFPIIV</sequence>
<protein>
    <recommendedName>
        <fullName>Beta-casein</fullName>
    </recommendedName>
    <component>
        <recommendedName>
            <fullName>Casoparan</fullName>
        </recommendedName>
    </component>
    <component>
        <recommendedName>
            <fullName>Antioxidant peptide</fullName>
        </recommendedName>
    </component>
    <component>
        <recommendedName>
            <fullName>Casohypotensin</fullName>
        </recommendedName>
    </component>
</protein>
<keyword id="KW-0002">3D-structure</keyword>
<keyword id="KW-0049">Antioxidant</keyword>
<keyword id="KW-0903">Direct protein sequencing</keyword>
<keyword id="KW-0382">Hypotensive agent</keyword>
<keyword id="KW-0481">Metalloenzyme inhibitor</keyword>
<keyword id="KW-0483">Metalloprotease inhibitor</keyword>
<keyword id="KW-0494">Milk protein</keyword>
<keyword id="KW-0597">Phosphoprotein</keyword>
<keyword id="KW-0646">Protease inhibitor</keyword>
<keyword id="KW-1185">Reference proteome</keyword>
<keyword id="KW-0964">Secreted</keyword>
<keyword id="KW-0732">Signal</keyword>
<comment type="function">
    <text>Important role in determination of the surface properties of the casein micelles.</text>
</comment>
<comment type="function">
    <text>Casoparan acts as a macrophage activator, increasing the phagocytic activity of macrophages and peroxide release from macrophages. It also acts as a bradykinin-potentiating peptide.</text>
</comment>
<comment type="function">
    <text>Casohypotensin acts as a bradykinin-potentiating peptide. Induces hypotension in rats. Acts as a strong competitive inhibitor of endo-oligopeptidase A.</text>
</comment>
<comment type="function">
    <text>Antioxidant peptide has antioxidant activity.</text>
</comment>
<comment type="interaction">
    <interactant intactId="EBI-5260183">
        <id>P02666</id>
    </interactant>
    <interactant intactId="EBI-547165">
        <id>P0C0V0</id>
        <label>degP</label>
    </interactant>
    <organismsDiffer>true</organismsDiffer>
    <experiments>9</experiments>
</comment>
<comment type="interaction">
    <interactant intactId="EBI-5260183">
        <id>P02666</id>
    </interactant>
    <interactant intactId="EBI-7147442">
        <id>Q8IXL6</id>
        <label>FAM20C</label>
    </interactant>
    <organismsDiffer>true</organismsDiffer>
    <experiments>3</experiments>
</comment>
<comment type="interaction">
    <interactant intactId="EBI-5260183">
        <id>P02666</id>
    </interactant>
    <interactant intactId="EBI-517086">
        <id>O43464</id>
        <label>HTRA2</label>
    </interactant>
    <organismsDiffer>true</organismsDiffer>
    <experiments>7</experiments>
</comment>
<comment type="interaction">
    <interactant intactId="EBI-5260183">
        <id>P02666</id>
    </interactant>
    <interactant intactId="EBI-5271862">
        <id>PRO_0000026946</id>
        <label>HTRA2</label>
        <dbReference type="UniProtKB" id="O43464"/>
    </interactant>
    <organismsDiffer>true</organismsDiffer>
    <experiments>2</experiments>
</comment>
<comment type="interaction">
    <interactant intactId="EBI-5260183">
        <id>P02666</id>
    </interactant>
    <interactant intactId="EBI-2867394">
        <id>P83110</id>
        <label>HTRA3</label>
    </interactant>
    <organismsDiffer>true</organismsDiffer>
    <experiments>8</experiments>
</comment>
<comment type="interaction">
    <interactant intactId="EBI-5260183">
        <id>P02666</id>
    </interactant>
    <interactant intactId="EBI-21776319">
        <id>P83105</id>
        <label>HTRA4</label>
    </interactant>
    <organismsDiffer>true</organismsDiffer>
    <experiments>5</experiments>
</comment>
<comment type="interaction">
    <interactant intactId="EBI-5260183">
        <id>P02666</id>
    </interactant>
    <interactant intactId="EBI-357448">
        <id>P36776</id>
        <label>LONP1</label>
    </interactant>
    <organismsDiffer>true</organismsDiffer>
    <experiments>6</experiments>
</comment>
<comment type="subcellular location">
    <subcellularLocation>
        <location>Secreted</location>
    </subcellularLocation>
</comment>
<comment type="tissue specificity">
    <text>Mammary gland specific. Secreted in milk.</text>
</comment>
<comment type="mass spectrometry" mass="872.51" method="Electrospray" evidence="16">
    <molecule>Antioxidant peptide</molecule>
</comment>
<comment type="polymorphism">
    <text>Leu-152 is present in the variants F and G; Gln-190 and Glu-210 are present in the variant H. The sequence shown is the A2 variant.</text>
</comment>
<comment type="similarity">
    <text evidence="18">Belongs to the beta-casein family.</text>
</comment>
<comment type="sequence caution" evidence="18">
    <conflict type="erroneous initiation">
        <sequence resource="EMBL-CDS" id="AAW84270"/>
    </conflict>
</comment>
<comment type="sequence caution" evidence="18">
    <conflict type="erroneous initiation">
        <sequence resource="EMBL-CDS" id="AAW84271"/>
    </conflict>
</comment>
<comment type="sequence caution" evidence="18">
    <conflict type="frameshift">
        <sequence resource="EMBL-CDS" id="ABL74247"/>
    </conflict>
</comment>
<comment type="online information" name="Protein Spotlight">
    <link uri="https://www.proteinspotlight.org/back_issues/016"/>
    <text>Of buttons, digestion and glue - Issue 16 of November 2001</text>
</comment>
<reference key="1">
    <citation type="journal article" date="1987" name="Biochem. Biophys. Res. Commun.">
        <title>Cloning and sequence analysis of bovine beta-casein cDNA.</title>
        <authorList>
            <person name="Jimenez-Flores R."/>
            <person name="Kang Y.C."/>
            <person name="Richardson T."/>
        </authorList>
    </citation>
    <scope>NUCLEOTIDE SEQUENCE [MRNA]</scope>
    <scope>VARIANTS LEU-108; PRO-152 AND LEU-153</scope>
</reference>
<reference key="2">
    <citation type="journal article" date="1987" name="Mol. Biol. (Mosk.)">
        <title>Primary structure of bovine beta-casein cDNA.</title>
        <authorList>
            <person name="Baev A.A."/>
            <person name="Smirnov I.K."/>
            <person name="Gorodetsky S.I."/>
        </authorList>
    </citation>
    <scope>NUCLEOTIDE SEQUENCE [MRNA]</scope>
    <scope>VARIANT HIS-82</scope>
</reference>
<reference key="3">
    <citation type="journal article" date="1987" name="Mol. Biol. Evol.">
        <title>Complete nucleotide sequences of bovine alpha S2- and beta-casein cDNAs: comparisons with related sequences in other species.</title>
        <authorList>
            <person name="Stewart A.F."/>
            <person name="Bonsing J."/>
            <person name="Beattie C.W."/>
            <person name="Shah F."/>
            <person name="Willis I.M."/>
            <person name="Mackinlay A.G."/>
        </authorList>
    </citation>
    <scope>NUCLEOTIDE SEQUENCE [MRNA]</scope>
</reference>
<reference key="4">
    <citation type="journal article" date="1988" name="Aust. J. Biol. Sci.">
        <title>Complete nucleotide sequence of the bovine beta-casein gene.</title>
        <authorList>
            <person name="Bonsing J."/>
            <person name="Ring J.M."/>
            <person name="Stewart A.F."/>
            <person name="Mackinlay A.G."/>
        </authorList>
    </citation>
    <scope>NUCLEOTIDE SEQUENCE [GENOMIC DNA]</scope>
    <scope>VARIANT HIS-82</scope>
</reference>
<reference key="5">
    <citation type="journal article" date="1993" name="Protein Eng.">
        <title>Overproduction of bovine beta-casein in Escherichia coli and engineering of its main chymosin cleavage site.</title>
        <authorList>
            <person name="Simons G."/>
            <person name="van den Heuvel W."/>
            <person name="Reynen T."/>
            <person name="Frijters A."/>
            <person name="Rutten G."/>
            <person name="Slangen C.J."/>
            <person name="Groenen M."/>
            <person name="de Vos W.M."/>
            <person name="Siezen R.J."/>
        </authorList>
    </citation>
    <scope>NUCLEOTIDE SEQUENCE [MRNA]</scope>
    <scope>VARIANT A3 GLN-121</scope>
    <source>
        <tissue>Mammary gland</tissue>
    </source>
</reference>
<reference key="6">
    <citation type="submission" date="2005-12" db="EMBL/GenBank/DDBJ databases">
        <authorList>
            <consortium name="NIH - Mammalian Gene Collection (MGC) project"/>
        </authorList>
    </citation>
    <scope>NUCLEOTIDE SEQUENCE [LARGE SCALE MRNA]</scope>
    <scope>VARIANTS HIS-82 AND ARG-137</scope>
    <source>
        <strain>Crossbred X Angus</strain>
        <tissue>Liver</tissue>
    </source>
</reference>
<reference key="7">
    <citation type="journal article" date="2006" name="Res. Vet. Sci.">
        <title>Invasive potential of bacterial isolates associated with subclinical bovine mastitis.</title>
        <authorList>
            <person name="Anaya-Lopez J.L."/>
            <person name="Contreras-Guzman O.E."/>
            <person name="Carabez-Trejo A."/>
            <person name="Baizabal-Aguirre V.M."/>
            <person name="Lopez-Meza J.E."/>
            <person name="Valdez-Alarcon J.J."/>
            <person name="Ochoa-Zarzosa A."/>
        </authorList>
    </citation>
    <scope>NUCLEOTIDE SEQUENCE [MRNA] OF 1-101</scope>
    <source>
        <tissue>Mammary epithelium</tissue>
    </source>
</reference>
<reference key="8">
    <citation type="journal article" date="1972" name="Eur. J. Biochem.">
        <title>Primary structure of bovine beta casein. Complete sequence.</title>
        <authorList>
            <person name="Ribadeau-Dumas B."/>
            <person name="Brignon G."/>
            <person name="Grosclaude F."/>
            <person name="Mercier J.-C."/>
        </authorList>
    </citation>
    <scope>PROTEIN SEQUENCE OF 16-224 (VARIANT A2)</scope>
    <scope>VARIANT LEU-108</scope>
</reference>
<reference key="9">
    <citation type="journal article" date="1988" name="FEBS Lett.">
        <title>A new strategy for primary structure determination of proteins: application to bovine beta-casein.</title>
        <authorList>
            <person name="Carles C."/>
            <person name="Huet J.-C."/>
            <person name="Ribadeau-Dumas B."/>
        </authorList>
    </citation>
    <scope>PROTEIN SEQUENCE OF 16-224 (VARIANT A2)</scope>
</reference>
<reference key="10">
    <citation type="journal article" date="2000" name="Anim. Genet.">
        <title>Biochemical, molecular and physiological characterization of a new beta-casein variant detected in Korean cattle.</title>
        <authorList>
            <person name="Han S.K."/>
            <person name="Shin Y.C."/>
            <person name="Byun H.D."/>
        </authorList>
    </citation>
    <scope>NUCLEOTIDE SEQUENCE [GENOMIC DNA] OF 18-57</scope>
    <scope>PROTEIN SEQUENCE OF 16-224 (VARIANT H)</scope>
    <scope>VARIANT D LYS-33</scope>
    <source>
        <strain>Korean</strain>
        <tissue>Milk</tissue>
    </source>
</reference>
<reference key="11">
    <citation type="journal article" date="1991" name="Rapid Commun. Mass Spectrom.">
        <title>Analysis of bovine beta-casein tryptic digest by continuous-flow fast-atom bombardment mass spectrometry.</title>
        <authorList>
            <person name="Jones D.S."/>
            <person name="Heerma W."/>
            <person name="van Wassenaar P.D."/>
            <person name="Haverkamp J."/>
        </authorList>
    </citation>
    <scope>PROTEIN SEQUENCE OF 41-71; 113-157 AND 180-224</scope>
    <scope>VARIANT GLN-132</scope>
</reference>
<reference key="12">
    <citation type="journal article" date="2004" name="Mediators Inflamm.">
        <title>Effects of 'casoparan', a peptide isolated from casein hydrolysates with mastoparan-like properties.</title>
        <authorList>
            <person name="Lebrun I."/>
            <person name="Cavallaro V."/>
            <person name="Juliano L."/>
            <person name="Juliano M.A."/>
            <person name="de Sousa e Silva M.C.C."/>
        </authorList>
    </citation>
    <scope>PROTEIN SEQUENCE OF 41-45</scope>
    <scope>FUNCTION</scope>
</reference>
<reference key="13">
    <citation type="journal article" date="1974" name="FEBS Lett.">
        <title>The beta E variant and the phosphorylation code of bovine caseins.</title>
        <authorList>
            <person name="Grosclaude F."/>
            <person name="Mahe M.-F."/>
            <person name="Voglino G.-F."/>
        </authorList>
    </citation>
    <scope>PROTEIN SEQUENCE OF 48-63</scope>
    <scope>VARIANT E LYS-51</scope>
</reference>
<reference key="14">
    <citation type="submission" date="2006-11" db="EMBL/GenBank/DDBJ databases">
        <title>Polymorphisms in beta and kappa casein genes in bubaline and bovine.</title>
        <authorList>
            <person name="Otaviano A.R."/>
            <person name="Lima A.L.F."/>
            <person name="Laureano M.M.M."/>
            <person name="Albuquerque L.G."/>
            <person name="Tonhati H."/>
            <person name="Sena J.A.D."/>
        </authorList>
    </citation>
    <scope>NUCLEOTIDE SEQUENCE [GENOMIC DNA] OF 58-223</scope>
</reference>
<reference key="15">
    <citation type="submission" date="2007-05" db="EMBL/GenBank/DDBJ databases">
        <title>Polymorphism in the cattle beta casein gene.</title>
        <authorList>
            <person name="Shahla M.N."/>
            <person name="Cheema F.R."/>
            <person name="Naeem M.K."/>
            <person name="Riazuddin S."/>
        </authorList>
    </citation>
    <scope>NUCLEOTIDE SEQUENCE [GENOMIC DNA] OF 58-223</scope>
</reference>
<reference key="16">
    <citation type="submission" date="2001-01" db="EMBL/GenBank/DDBJ databases">
        <title>Characterization of milk proteins.</title>
        <authorList>
            <person name="Klotz A."/>
            <person name="Buchberger J."/>
            <person name="Krause I."/>
            <person name="Einspanier R."/>
        </authorList>
    </citation>
    <scope>NUCLEOTIDE SEQUENCE [GENOMIC DNA] OF 63-208</scope>
    <source>
        <tissue>Mammary gland</tissue>
    </source>
</reference>
<reference key="17">
    <citation type="journal article" date="1984" name="Gene">
        <title>Identification of bacterial clones encoding bovine caseins by direct immunological screening of the cDNA library.</title>
        <authorList>
            <person name="Ivanov V.N."/>
            <person name="Kershulite D.R."/>
            <person name="Bayev A.A."/>
            <person name="Akhundova A.A."/>
            <person name="Sulimova G.E."/>
            <person name="Judinkova E.S."/>
            <person name="Gorodetsky S.I."/>
        </authorList>
    </citation>
    <scope>NUCLEOTIDE SEQUENCE [MRNA] OF 68-105</scope>
</reference>
<reference key="18">
    <citation type="journal article" date="1985" name="Mol. Biol. (Mosk.)">
        <title>Identification of bacterial clones that encode cow's caseins by direct immunological screening of the cDNA library.</title>
        <authorList>
            <person name="Ivanov V.N."/>
            <person name="Kershulite D.R."/>
            <person name="Bayev A.A."/>
            <person name="Akhundova A.A."/>
            <person name="Silimova G.E."/>
        </authorList>
    </citation>
    <scope>NUCLEOTIDE SEQUENCE [MRNA] OF 68-95</scope>
</reference>
<reference key="19">
    <citation type="journal article" date="2007" name="J. Chromatogr. A">
        <title>Peptic digestion of beta-casein: Time course and fate of possible bioactive peptides.</title>
        <authorList>
            <person name="Schmelzer C.E.H."/>
            <person name="Schoeps R."/>
            <person name="Reynell L."/>
            <person name="Ulbrich-Hofmann R."/>
            <person name="Neubert R.H.H."/>
            <person name="Raith K."/>
        </authorList>
    </citation>
    <scope>PROTEIN SEQUENCE OF 74-108</scope>
    <scope>VARIANT LEU-108</scope>
    <scope>PHOSPHORYLATION</scope>
    <scope>IDENTIFICATION BY MASS SPECTROMETRY</scope>
</reference>
<reference key="20">
    <citation type="journal article" date="2002" name="J. Anim. Breed. Genet.">
        <title>A new variant in exon VII of bovine beta-casein gene (CSN2) and its contribution among European cattle breeds.</title>
        <authorList>
            <person name="Jann O."/>
            <person name="Ceriotti G."/>
            <person name="Caroli A."/>
            <person name="Erhardt G."/>
        </authorList>
    </citation>
    <scope>NUCLEOTIDE SEQUENCE [GENOMIC DNA] OF 80-143</scope>
    <scope>VARIANT LEU-108</scope>
</reference>
<reference key="21">
    <citation type="submission" date="2008-01" db="UniProtKB">
        <title>Studies on antioxidative peptides generated in cheddar cheese.</title>
        <authorList>
            <person name="Gupta A."/>
            <person name="Mann B."/>
            <person name="Kumar Bajaj R."/>
            <person name="Sangwan R.B."/>
        </authorList>
    </citation>
    <scope>PROTEIN SEQUENCE OF 113-120</scope>
    <scope>FUNCTION</scope>
    <scope>MASS SPECTROMETRY</scope>
</reference>
<reference key="22">
    <citation type="journal article" date="1970" name="C. R. Hebd. Seances Acad. Sci., D, Sci. Nat.">
        <title>Localization in the peptide chain of bovine beta casein of the His-Gln substitution differentiating the A2 and A3 genetic variants.</title>
        <authorList>
            <person name="Ribadeau-Dumas B."/>
            <person name="Grosclaude F."/>
            <person name="Mercier J.-C."/>
        </authorList>
    </citation>
    <scope>PROTEIN SEQUENCE OF 118-124</scope>
    <scope>VARIANT A3 GLN-121</scope>
</reference>
<reference key="23">
    <citation type="journal article" date="1998" name="Int. Dairy J.">
        <title>Characterization of a non-electrophoretic genetic variant of beta-casein by peptide mapping and mass spectrometric analysis.</title>
        <authorList>
            <person name="Dong C."/>
            <person name="Ng-Kwai-Hang K.F."/>
        </authorList>
        <dbReference type="AGRICOLA" id="IND22004684"/>
    </citation>
    <scope>PROTEIN SEQUENCE OF 125-195 (VARIANTS A1 AND G)</scope>
</reference>
<reference key="24">
    <citation type="journal article" date="1995" name="Can. J. Physiol. Pharmacol.">
        <title>Isolation and characterization of a new bradykinin potentiating octapeptide from gamma-casein.</title>
        <authorList>
            <person name="Lebrun I."/>
            <person name="Lebrun F.L.A.S."/>
            <person name="Henriques O.B."/>
            <person name="Carmona A.K."/>
            <person name="Juliano L."/>
            <person name="Camargo A.C.M."/>
        </authorList>
    </citation>
    <scope>PROTEIN SEQUENCE OF 129-136</scope>
    <scope>FUNCTION</scope>
    <scope>VARIANT GLN-132</scope>
</reference>
<reference key="25">
    <citation type="journal article" date="2003" name="J. Protein Chem.">
        <title>Biochemical and pharmacological aspects of two bradykinin-potentiating peptides obtained from tryptic hydrolysis of casein.</title>
        <authorList>
            <person name="Perpetuo E.A."/>
            <person name="Juliano L."/>
            <person name="Lebrun I."/>
        </authorList>
    </citation>
    <scope>PROTEIN SEQUENCE OF 129-136</scope>
    <scope>FUNCTION</scope>
</reference>
<reference key="26">
    <citation type="journal article" date="1995" name="J. Chromatogr. A">
        <title>Identification of a new genetic variant of bovine beta-casein using reversed-phase high-performance liquid chromatography and mass spectrometric analysis.</title>
        <authorList>
            <person name="Visser S."/>
            <person name="Slangen C.J."/>
            <person name="Lagerwerf F.M."/>
            <person name="Van Dongen W.D."/>
            <person name="Haverkamp J."/>
        </authorList>
    </citation>
    <scope>PROTEIN SEQUENCE OF 160-171 (VARIANT F)</scope>
</reference>
<reference key="27">
    <citation type="journal article" date="1982" name="DNA">
        <title>Construction and identification by partial nucleotide sequence analysis of bovine casein and beta-lactoglobulin cDNA clones.</title>
        <authorList>
            <person name="Willis I.M."/>
            <person name="Stewart A.F."/>
            <person name="Caputo A."/>
            <person name="Thompson A.R."/>
            <person name="McKinlay A.G."/>
        </authorList>
    </citation>
    <scope>NUCLEOTIDE SEQUENCE [MRNA] OF 170-184</scope>
</reference>
<reference key="28">
    <citation type="journal article" date="2005" name="J. Proteome Res.">
        <title>Extended Range Proteomic Analysis (ERPA): a new and sensitive LC-MS platform for high sequence coverage of complex proteins with extensive post-translational modifications-comprehensive analysis of beta-casein and epidermal growth factor receptor (EGFR).</title>
        <authorList>
            <person name="Wu S.L."/>
            <person name="Kim J."/>
            <person name="Hancock W.S."/>
            <person name="Karger B."/>
        </authorList>
    </citation>
    <scope>PHOSPHORYLATION AT SER-30; SER-32; SER-33; SER-34 AND SER-50</scope>
    <scope>IDENTIFICATION BY MASS SPECTROMETRY</scope>
</reference>
<reference key="29">
    <citation type="journal article" date="2007" name="Mol. Cell. Proteomics">
        <title>Reference-facilitated phosphoproteomics: fast and reliable phosphopeptide validation by micro LC-ESI-Q-TOF MS/MS.</title>
        <authorList>
            <person name="Imanishi S.Y."/>
            <person name="Kochin V."/>
            <person name="Ferraris S.E."/>
            <person name="de Thonel A."/>
            <person name="Pallari H.M."/>
            <person name="Corthals G.L."/>
            <person name="Eriksson J.E."/>
        </authorList>
    </citation>
    <scope>PHOSPHORYLATION AT SER-30; SER-32; SER-33; SER-34 AND SER-50</scope>
    <scope>IDENTIFICATION BY MASS SPECTROMETRY</scope>
</reference>
<reference key="30">
    <citation type="journal article" date="1972" name="Eur. J. Biochem.">
        <title>Characterization of genetic variants of alpha-S1 and beta bovine caseins.</title>
        <authorList>
            <person name="Grosclaude F."/>
            <person name="Mahe M.-F."/>
            <person name="Mercier J.-C."/>
            <person name="Ribadeau-Dumas B."/>
        </authorList>
    </citation>
    <scope>VARIANTS A1; B AND C</scope>
</reference>
<feature type="signal peptide" evidence="1 7 10">
    <location>
        <begin position="1"/>
        <end position="15"/>
    </location>
</feature>
<feature type="chain" id="PRO_0000004470" description="Beta-casein">
    <location>
        <begin position="16"/>
        <end position="224"/>
    </location>
</feature>
<feature type="peptide" id="PRO_0000292031" description="Casoparan">
    <location>
        <begin position="41"/>
        <end position="45"/>
    </location>
</feature>
<feature type="peptide" id="PRO_0000320153" description="Antioxidant peptide">
    <location>
        <begin position="113"/>
        <end position="120"/>
    </location>
</feature>
<feature type="peptide" id="PRO_0000308464" description="Casohypotensin">
    <location>
        <begin position="129"/>
        <end position="136"/>
    </location>
</feature>
<feature type="modified residue" description="Phosphoserine" evidence="2 3 10">
    <location>
        <position position="30"/>
    </location>
</feature>
<feature type="modified residue" description="Phosphoserine" evidence="2 3 10">
    <location>
        <position position="32"/>
    </location>
</feature>
<feature type="modified residue" description="Phosphoserine" evidence="2 3 10">
    <location>
        <position position="33"/>
    </location>
</feature>
<feature type="modified residue" description="Phosphoserine" evidence="2 3 10">
    <location>
        <position position="34"/>
    </location>
</feature>
<feature type="modified residue" description="Phosphoserine; in variant A1, variant A2, variant A3, variant B, variant E, variant F, variant G and variant H" evidence="2 3">
    <location>
        <position position="50"/>
    </location>
</feature>
<feature type="sequence variant" description="In variant D." evidence="1">
    <original>S</original>
    <variation>K</variation>
    <location>
        <position position="33"/>
    </location>
</feature>
<feature type="sequence variant" description="In variant H.">
    <original>R</original>
    <variation>C</variation>
    <location>
        <position position="40"/>
    </location>
</feature>
<feature type="sequence variant" description="In variant E." evidence="9">
    <original>E</original>
    <variation>K</variation>
    <location>
        <position position="51"/>
    </location>
</feature>
<feature type="sequence variant" description="In variant C.">
    <original>E</original>
    <variation>K</variation>
    <location>
        <position position="52"/>
    </location>
</feature>
<feature type="sequence variant" description="In variants A1, B, C, F and G." evidence="6 14 17">
    <original>P</original>
    <variation>H</variation>
    <location>
        <position position="82"/>
    </location>
</feature>
<feature type="sequence variant" description="In variant H.">
    <original>L</original>
    <variation>I</variation>
    <location>
        <position position="103"/>
    </location>
</feature>
<feature type="sequence variant" evidence="4 8 10 15">
    <original>M</original>
    <variation>L</variation>
    <location>
        <position position="108"/>
    </location>
</feature>
<feature type="sequence variant" description="In variant A3." evidence="11 13">
    <original>H</original>
    <variation>Q</variation>
    <location>
        <position position="121"/>
    </location>
</feature>
<feature type="sequence variant" description="In variants A1 and G." evidence="5 12">
    <original>E</original>
    <variation>Q</variation>
    <location>
        <position position="132"/>
    </location>
</feature>
<feature type="sequence variant" description="In variant B." evidence="17">
    <original>S</original>
    <variation>R</variation>
    <location>
        <position position="137"/>
    </location>
</feature>
<feature type="sequence variant" description="In variants A1 and H." evidence="8">
    <original>L</original>
    <variation>P</variation>
    <location>
        <position position="152"/>
    </location>
</feature>
<feature type="sequence variant" description="In variants A1, G and H." evidence="8">
    <original>P</original>
    <variation>L</variation>
    <location>
        <position position="153"/>
    </location>
</feature>
<feature type="sequence variant" description="In variant F.">
    <original>P</original>
    <variation>L</variation>
    <location>
        <position position="167"/>
    </location>
</feature>
<feature type="sequence variant" description="In variants A1 and G.">
    <original>Q</original>
    <variation>E</variation>
    <location>
        <position position="190"/>
    </location>
</feature>
<feature type="sequence conflict" description="In Ref. 11; AA sequence." evidence="18" ref="11">
    <original>S</original>
    <variation>Z</variation>
    <location>
        <position position="50"/>
    </location>
</feature>
<feature type="sequence conflict" description="In Ref. 14; ABL74247." evidence="18" ref="14">
    <original>Q</original>
    <variation>R</variation>
    <location>
        <position position="69"/>
    </location>
</feature>
<feature type="sequence conflict" description="In Ref. 14; ABL74247." evidence="18" ref="14">
    <original>K</original>
    <variation>R</variation>
    <location>
        <position position="112"/>
    </location>
</feature>
<feature type="sequence conflict" description="In Ref. 16; CAC37028." evidence="18" ref="16">
    <original>Y</original>
    <variation>V</variation>
    <location>
        <position position="208"/>
    </location>
</feature>
<feature type="sequence conflict" description="In Ref. 11; AA sequence." evidence="18" ref="11">
    <original>QE</original>
    <variation>EQ</variation>
    <location>
        <begin position="209"/>
        <end position="210"/>
    </location>
</feature>
<feature type="sequence conflict" description="In Ref. 1; AAA30430 and 8; no nucleotide entry." evidence="18" ref="1 8">
    <original>E</original>
    <variation>Q</variation>
    <location>
        <position position="210"/>
    </location>
</feature>
<feature type="sequence conflict" description="In Ref. 15; ABR10906." evidence="18" ref="15">
    <original>V</original>
    <variation>A</variation>
    <location>
        <position position="212"/>
    </location>
</feature>
<gene>
    <name type="primary">CSN2</name>
</gene>
<organism>
    <name type="scientific">Bos taurus</name>
    <name type="common">Bovine</name>
    <dbReference type="NCBI Taxonomy" id="9913"/>
    <lineage>
        <taxon>Eukaryota</taxon>
        <taxon>Metazoa</taxon>
        <taxon>Chordata</taxon>
        <taxon>Craniata</taxon>
        <taxon>Vertebrata</taxon>
        <taxon>Euteleostomi</taxon>
        <taxon>Mammalia</taxon>
        <taxon>Eutheria</taxon>
        <taxon>Laurasiatheria</taxon>
        <taxon>Artiodactyla</taxon>
        <taxon>Ruminantia</taxon>
        <taxon>Pecora</taxon>
        <taxon>Bovidae</taxon>
        <taxon>Bovinae</taxon>
        <taxon>Bos</taxon>
    </lineage>
</organism>
<accession>P02666</accession>
<accession>A1YQZ8</accession>
<accession>A6N8V0</accession>
<accession>Q2TA13</accession>
<accession>Q5EEQ6</accession>
<accession>Q5EEQ7</accession>
<accession>Q6UN63</accession>
<accession>Q9BDG5</accession>
<accession>Q9TSD5</accession>
<proteinExistence type="evidence at protein level"/>
<dbReference type="EMBL" id="M15132">
    <property type="protein sequence ID" value="AAA30430.1"/>
    <property type="molecule type" value="mRNA"/>
</dbReference>
<dbReference type="EMBL" id="X06359">
    <property type="protein sequence ID" value="CAA29658.1"/>
    <property type="molecule type" value="mRNA"/>
</dbReference>
<dbReference type="EMBL" id="M16645">
    <property type="protein sequence ID" value="AAA30480.1"/>
    <property type="molecule type" value="mRNA"/>
</dbReference>
<dbReference type="EMBL" id="M55158">
    <property type="protein sequence ID" value="AAA30431.1"/>
    <property type="molecule type" value="Genomic_DNA"/>
</dbReference>
<dbReference type="EMBL" id="S67277">
    <property type="protein sequence ID" value="AAB29137.1"/>
    <property type="molecule type" value="mRNA"/>
</dbReference>
<dbReference type="EMBL" id="BC111172">
    <property type="protein sequence ID" value="AAI11173.1"/>
    <property type="molecule type" value="mRNA"/>
</dbReference>
<dbReference type="EMBL" id="AY899917">
    <property type="protein sequence ID" value="AAW84270.1"/>
    <property type="status" value="ALT_INIT"/>
    <property type="molecule type" value="mRNA"/>
</dbReference>
<dbReference type="EMBL" id="AY899918">
    <property type="protein sequence ID" value="AAW84271.1"/>
    <property type="status" value="ALT_INIT"/>
    <property type="molecule type" value="mRNA"/>
</dbReference>
<dbReference type="EMBL" id="AH007287">
    <property type="protein sequence ID" value="AAD09813.1"/>
    <property type="molecule type" value="Genomic_DNA"/>
</dbReference>
<dbReference type="EMBL" id="EF123100">
    <property type="protein sequence ID" value="ABL74247.1"/>
    <property type="status" value="ALT_FRAME"/>
    <property type="molecule type" value="Genomic_DNA"/>
</dbReference>
<dbReference type="EMBL" id="EF628290">
    <property type="protein sequence ID" value="ABR10906.1"/>
    <property type="molecule type" value="Genomic_DNA"/>
</dbReference>
<dbReference type="EMBL" id="AJ296330">
    <property type="protein sequence ID" value="CAC37028.1"/>
    <property type="molecule type" value="Genomic_DNA"/>
</dbReference>
<dbReference type="EMBL" id="M64756">
    <property type="protein sequence ID" value="AAB59254.1"/>
    <property type="molecule type" value="mRNA"/>
</dbReference>
<dbReference type="EMBL" id="AY366419">
    <property type="protein sequence ID" value="AAR14677.1"/>
    <property type="molecule type" value="Genomic_DNA"/>
</dbReference>
<dbReference type="EMBL" id="K01087">
    <property type="protein sequence ID" value="AAA30481.1"/>
    <property type="molecule type" value="mRNA"/>
</dbReference>
<dbReference type="PIR" id="A59068">
    <property type="entry name" value="A59068"/>
</dbReference>
<dbReference type="PIR" id="I45873">
    <property type="entry name" value="KBBOA2"/>
</dbReference>
<dbReference type="RefSeq" id="XP_010804480.1">
    <property type="nucleotide sequence ID" value="XM_010806178.1"/>
</dbReference>
<dbReference type="PDB" id="7TTR">
    <property type="method" value="EM"/>
    <property type="resolution" value="2.96 A"/>
    <property type="chains" value="P=1-224"/>
</dbReference>
<dbReference type="PDB" id="7TTS">
    <property type="method" value="EM"/>
    <property type="resolution" value="2.90 A"/>
    <property type="chains" value="P=1-224"/>
</dbReference>
<dbReference type="PDBsum" id="7TTR"/>
<dbReference type="PDBsum" id="7TTS"/>
<dbReference type="PCDDB" id="P02666"/>
<dbReference type="SMR" id="P02666"/>
<dbReference type="DIP" id="DIP-46257N"/>
<dbReference type="FunCoup" id="P02666">
    <property type="interactions" value="42"/>
</dbReference>
<dbReference type="IntAct" id="P02666">
    <property type="interactions" value="7"/>
</dbReference>
<dbReference type="MINT" id="P02666"/>
<dbReference type="STRING" id="9913.ENSBTAP00000003409"/>
<dbReference type="BindingDB" id="P02666"/>
<dbReference type="ChEMBL" id="CHEMBL3313833"/>
<dbReference type="Allergome" id="10199">
    <property type="allergen name" value="Bos d 11.0101"/>
</dbReference>
<dbReference type="Allergome" id="167">
    <property type="allergen name" value="Bos d 8"/>
</dbReference>
<dbReference type="Allergome" id="2736">
    <property type="allergen name" value="Bos d 11"/>
</dbReference>
<dbReference type="GlyGen" id="P02666">
    <property type="glycosylation" value="1 site, 1 O-linked glycan (1 site)"/>
</dbReference>
<dbReference type="iPTMnet" id="P02666"/>
<dbReference type="PaxDb" id="9913-ENSBTAP00000003409"/>
<dbReference type="PeptideAtlas" id="P02666"/>
<dbReference type="GeneID" id="281099"/>
<dbReference type="KEGG" id="bta:281099"/>
<dbReference type="CTD" id="1447"/>
<dbReference type="eggNOG" id="ENOG502RU0R">
    <property type="taxonomic scope" value="Eukaryota"/>
</dbReference>
<dbReference type="HOGENOM" id="CLU_106775_0_0_1"/>
<dbReference type="InParanoid" id="P02666"/>
<dbReference type="OrthoDB" id="9838331at2759"/>
<dbReference type="TreeFam" id="TF336929"/>
<dbReference type="PRO" id="PR:P02666"/>
<dbReference type="Proteomes" id="UP000009136">
    <property type="component" value="Unplaced"/>
</dbReference>
<dbReference type="GO" id="GO:0005615">
    <property type="term" value="C:extracellular space"/>
    <property type="evidence" value="ECO:0000314"/>
    <property type="project" value="CAFA"/>
</dbReference>
<dbReference type="GO" id="GO:0005794">
    <property type="term" value="C:Golgi apparatus"/>
    <property type="evidence" value="ECO:0000314"/>
    <property type="project" value="AgBase"/>
</dbReference>
<dbReference type="GO" id="GO:0005796">
    <property type="term" value="C:Golgi lumen"/>
    <property type="evidence" value="ECO:0000314"/>
    <property type="project" value="AgBase"/>
</dbReference>
<dbReference type="GO" id="GO:0016209">
    <property type="term" value="F:antioxidant activity"/>
    <property type="evidence" value="ECO:0007669"/>
    <property type="project" value="UniProtKB-KW"/>
</dbReference>
<dbReference type="GO" id="GO:0004869">
    <property type="term" value="F:cysteine-type endopeptidase inhibitor activity"/>
    <property type="evidence" value="ECO:0000314"/>
    <property type="project" value="CAFA"/>
</dbReference>
<dbReference type="GO" id="GO:0046872">
    <property type="term" value="F:metal ion binding"/>
    <property type="evidence" value="ECO:0000269"/>
    <property type="project" value="DisProt"/>
</dbReference>
<dbReference type="GO" id="GO:0019870">
    <property type="term" value="F:potassium channel inhibitor activity"/>
    <property type="evidence" value="ECO:0000314"/>
    <property type="project" value="AgBase"/>
</dbReference>
<dbReference type="GO" id="GO:0042803">
    <property type="term" value="F:protein homodimerization activity"/>
    <property type="evidence" value="ECO:0000314"/>
    <property type="project" value="AgBase"/>
</dbReference>
<dbReference type="GO" id="GO:0043124">
    <property type="term" value="P:negative regulation of canonical NF-kappaB signal transduction"/>
    <property type="evidence" value="ECO:0000314"/>
    <property type="project" value="CAFA"/>
</dbReference>
<dbReference type="GO" id="GO:0050728">
    <property type="term" value="P:negative regulation of inflammatory response"/>
    <property type="evidence" value="ECO:0000314"/>
    <property type="project" value="CAFA"/>
</dbReference>
<dbReference type="GO" id="GO:1903488">
    <property type="term" value="P:negative regulation of lactation"/>
    <property type="evidence" value="ECO:0000314"/>
    <property type="project" value="AgBase"/>
</dbReference>
<dbReference type="GO" id="GO:0010804">
    <property type="term" value="P:negative regulation of tumor necrosis factor-mediated signaling pathway"/>
    <property type="evidence" value="ECO:0000314"/>
    <property type="project" value="CAFA"/>
</dbReference>
<dbReference type="GO" id="GO:0008217">
    <property type="term" value="P:regulation of blood pressure"/>
    <property type="evidence" value="ECO:0007669"/>
    <property type="project" value="UniProtKB-KW"/>
</dbReference>
<dbReference type="GO" id="GO:1903496">
    <property type="term" value="P:response to 11-deoxycorticosterone"/>
    <property type="evidence" value="ECO:0000314"/>
    <property type="project" value="AgBase"/>
</dbReference>
<dbReference type="GO" id="GO:1903494">
    <property type="term" value="P:response to dehydroepiandrosterone"/>
    <property type="evidence" value="ECO:0000314"/>
    <property type="project" value="AgBase"/>
</dbReference>
<dbReference type="GO" id="GO:0032355">
    <property type="term" value="P:response to estradiol"/>
    <property type="evidence" value="ECO:0000314"/>
    <property type="project" value="AgBase"/>
</dbReference>
<dbReference type="GO" id="GO:0009408">
    <property type="term" value="P:response to heat"/>
    <property type="evidence" value="ECO:0000314"/>
    <property type="project" value="AgBase"/>
</dbReference>
<dbReference type="GO" id="GO:0032570">
    <property type="term" value="P:response to progesterone"/>
    <property type="evidence" value="ECO:0000314"/>
    <property type="project" value="AgBase"/>
</dbReference>
<dbReference type="DisProt" id="DP00329"/>
<dbReference type="InterPro" id="IPR001588">
    <property type="entry name" value="Casein"/>
</dbReference>
<dbReference type="InterPro" id="IPR016345">
    <property type="entry name" value="Casein_beta"/>
</dbReference>
<dbReference type="InterPro" id="IPR031305">
    <property type="entry name" value="Casein_CS"/>
</dbReference>
<dbReference type="PANTHER" id="PTHR11500">
    <property type="entry name" value="BETA CASEIN"/>
    <property type="match status" value="1"/>
</dbReference>
<dbReference type="PANTHER" id="PTHR11500:SF0">
    <property type="entry name" value="BETA-CASEIN"/>
    <property type="match status" value="1"/>
</dbReference>
<dbReference type="Pfam" id="PF00363">
    <property type="entry name" value="Casein"/>
    <property type="match status" value="1"/>
</dbReference>
<dbReference type="PIRSF" id="PIRSF002372">
    <property type="entry name" value="Beta-casein"/>
    <property type="match status" value="1"/>
</dbReference>
<dbReference type="PROSITE" id="PS00306">
    <property type="entry name" value="CASEIN_ALPHA_BETA"/>
    <property type="match status" value="1"/>
</dbReference>
<evidence type="ECO:0000269" key="1">
    <source>
    </source>
</evidence>
<evidence type="ECO:0000269" key="2">
    <source>
    </source>
</evidence>
<evidence type="ECO:0000269" key="3">
    <source>
    </source>
</evidence>
<evidence type="ECO:0000269" key="4">
    <source>
    </source>
</evidence>
<evidence type="ECO:0000269" key="5">
    <source>
    </source>
</evidence>
<evidence type="ECO:0000269" key="6">
    <source>
    </source>
</evidence>
<evidence type="ECO:0000269" key="7">
    <source>
    </source>
</evidence>
<evidence type="ECO:0000269" key="8">
    <source>
    </source>
</evidence>
<evidence type="ECO:0000269" key="9">
    <source>
    </source>
</evidence>
<evidence type="ECO:0000269" key="10">
    <source>
    </source>
</evidence>
<evidence type="ECO:0000269" key="11">
    <source>
    </source>
</evidence>
<evidence type="ECO:0000269" key="12">
    <source>
    </source>
</evidence>
<evidence type="ECO:0000269" key="13">
    <source>
    </source>
</evidence>
<evidence type="ECO:0000269" key="14">
    <source ref="2"/>
</evidence>
<evidence type="ECO:0000269" key="15">
    <source ref="20"/>
</evidence>
<evidence type="ECO:0000269" key="16">
    <source ref="21"/>
</evidence>
<evidence type="ECO:0000269" key="17">
    <source ref="6"/>
</evidence>
<evidence type="ECO:0000305" key="18"/>